<feature type="chain" id="PRO_0000109578" description="Protein translocase subunit SecA">
    <location>
        <begin position="1"/>
        <end position="875"/>
    </location>
</feature>
<feature type="binding site" evidence="1">
    <location>
        <position position="87"/>
    </location>
    <ligand>
        <name>ATP</name>
        <dbReference type="ChEBI" id="CHEBI:30616"/>
    </ligand>
</feature>
<feature type="binding site" evidence="1">
    <location>
        <begin position="105"/>
        <end position="109"/>
    </location>
    <ligand>
        <name>ATP</name>
        <dbReference type="ChEBI" id="CHEBI:30616"/>
    </ligand>
</feature>
<feature type="binding site" evidence="1">
    <location>
        <position position="512"/>
    </location>
    <ligand>
        <name>ATP</name>
        <dbReference type="ChEBI" id="CHEBI:30616"/>
    </ligand>
</feature>
<feature type="binding site" evidence="1">
    <location>
        <position position="860"/>
    </location>
    <ligand>
        <name>Zn(2+)</name>
        <dbReference type="ChEBI" id="CHEBI:29105"/>
    </ligand>
</feature>
<feature type="binding site" evidence="1">
    <location>
        <position position="862"/>
    </location>
    <ligand>
        <name>Zn(2+)</name>
        <dbReference type="ChEBI" id="CHEBI:29105"/>
    </ligand>
</feature>
<feature type="binding site" evidence="1">
    <location>
        <position position="871"/>
    </location>
    <ligand>
        <name>Zn(2+)</name>
        <dbReference type="ChEBI" id="CHEBI:29105"/>
    </ligand>
</feature>
<feature type="binding site" evidence="1">
    <location>
        <position position="872"/>
    </location>
    <ligand>
        <name>Zn(2+)</name>
        <dbReference type="ChEBI" id="CHEBI:29105"/>
    </ligand>
</feature>
<keyword id="KW-0067">ATP-binding</keyword>
<keyword id="KW-0997">Cell inner membrane</keyword>
<keyword id="KW-1003">Cell membrane</keyword>
<keyword id="KW-0963">Cytoplasm</keyword>
<keyword id="KW-0472">Membrane</keyword>
<keyword id="KW-0479">Metal-binding</keyword>
<keyword id="KW-0547">Nucleotide-binding</keyword>
<keyword id="KW-0653">Protein transport</keyword>
<keyword id="KW-1185">Reference proteome</keyword>
<keyword id="KW-1278">Translocase</keyword>
<keyword id="KW-0811">Translocation</keyword>
<keyword id="KW-0813">Transport</keyword>
<keyword id="KW-0862">Zinc</keyword>
<name>SECA_BUCAI</name>
<accession>P57297</accession>
<organism>
    <name type="scientific">Buchnera aphidicola subsp. Acyrthosiphon pisum (strain APS)</name>
    <name type="common">Acyrthosiphon pisum symbiotic bacterium</name>
    <dbReference type="NCBI Taxonomy" id="107806"/>
    <lineage>
        <taxon>Bacteria</taxon>
        <taxon>Pseudomonadati</taxon>
        <taxon>Pseudomonadota</taxon>
        <taxon>Gammaproteobacteria</taxon>
        <taxon>Enterobacterales</taxon>
        <taxon>Erwiniaceae</taxon>
        <taxon>Buchnera</taxon>
    </lineage>
</organism>
<protein>
    <recommendedName>
        <fullName evidence="1">Protein translocase subunit SecA</fullName>
        <ecNumber evidence="1">7.4.2.8</ecNumber>
    </recommendedName>
</protein>
<dbReference type="EC" id="7.4.2.8" evidence="1"/>
<dbReference type="EMBL" id="BA000003">
    <property type="protein sequence ID" value="BAB12918.1"/>
    <property type="molecule type" value="Genomic_DNA"/>
</dbReference>
<dbReference type="RefSeq" id="NP_240032.1">
    <property type="nucleotide sequence ID" value="NC_002528.1"/>
</dbReference>
<dbReference type="RefSeq" id="WP_010895999.1">
    <property type="nucleotide sequence ID" value="NC_002528.1"/>
</dbReference>
<dbReference type="SMR" id="P57297"/>
<dbReference type="STRING" id="563178.BUAP5A_198"/>
<dbReference type="EnsemblBacteria" id="BAB12918">
    <property type="protein sequence ID" value="BAB12918"/>
    <property type="gene ID" value="BAB12918"/>
</dbReference>
<dbReference type="KEGG" id="buc:BU201"/>
<dbReference type="PATRIC" id="fig|107806.10.peg.212"/>
<dbReference type="eggNOG" id="COG0653">
    <property type="taxonomic scope" value="Bacteria"/>
</dbReference>
<dbReference type="HOGENOM" id="CLU_005314_3_0_6"/>
<dbReference type="Proteomes" id="UP000001806">
    <property type="component" value="Chromosome"/>
</dbReference>
<dbReference type="GO" id="GO:0031522">
    <property type="term" value="C:cell envelope Sec protein transport complex"/>
    <property type="evidence" value="ECO:0007669"/>
    <property type="project" value="TreeGrafter"/>
</dbReference>
<dbReference type="GO" id="GO:0005829">
    <property type="term" value="C:cytosol"/>
    <property type="evidence" value="ECO:0007669"/>
    <property type="project" value="TreeGrafter"/>
</dbReference>
<dbReference type="GO" id="GO:0005886">
    <property type="term" value="C:plasma membrane"/>
    <property type="evidence" value="ECO:0007669"/>
    <property type="project" value="UniProtKB-SubCell"/>
</dbReference>
<dbReference type="GO" id="GO:0005524">
    <property type="term" value="F:ATP binding"/>
    <property type="evidence" value="ECO:0007669"/>
    <property type="project" value="UniProtKB-UniRule"/>
</dbReference>
<dbReference type="GO" id="GO:0046872">
    <property type="term" value="F:metal ion binding"/>
    <property type="evidence" value="ECO:0007669"/>
    <property type="project" value="UniProtKB-KW"/>
</dbReference>
<dbReference type="GO" id="GO:0008564">
    <property type="term" value="F:protein-exporting ATPase activity"/>
    <property type="evidence" value="ECO:0007669"/>
    <property type="project" value="UniProtKB-EC"/>
</dbReference>
<dbReference type="GO" id="GO:0065002">
    <property type="term" value="P:intracellular protein transmembrane transport"/>
    <property type="evidence" value="ECO:0007669"/>
    <property type="project" value="UniProtKB-UniRule"/>
</dbReference>
<dbReference type="GO" id="GO:0017038">
    <property type="term" value="P:protein import"/>
    <property type="evidence" value="ECO:0007669"/>
    <property type="project" value="InterPro"/>
</dbReference>
<dbReference type="GO" id="GO:0006605">
    <property type="term" value="P:protein targeting"/>
    <property type="evidence" value="ECO:0007669"/>
    <property type="project" value="UniProtKB-UniRule"/>
</dbReference>
<dbReference type="GO" id="GO:0043952">
    <property type="term" value="P:protein transport by the Sec complex"/>
    <property type="evidence" value="ECO:0007669"/>
    <property type="project" value="TreeGrafter"/>
</dbReference>
<dbReference type="CDD" id="cd17928">
    <property type="entry name" value="DEXDc_SecA"/>
    <property type="match status" value="1"/>
</dbReference>
<dbReference type="CDD" id="cd18803">
    <property type="entry name" value="SF2_C_secA"/>
    <property type="match status" value="1"/>
</dbReference>
<dbReference type="FunFam" id="3.40.50.300:FF:000113">
    <property type="entry name" value="Preprotein translocase subunit SecA"/>
    <property type="match status" value="1"/>
</dbReference>
<dbReference type="FunFam" id="3.90.1440.10:FF:000001">
    <property type="entry name" value="Preprotein translocase subunit SecA"/>
    <property type="match status" value="1"/>
</dbReference>
<dbReference type="FunFam" id="1.10.3060.10:FF:000003">
    <property type="entry name" value="Protein translocase subunit SecA"/>
    <property type="match status" value="1"/>
</dbReference>
<dbReference type="Gene3D" id="1.10.3060.10">
    <property type="entry name" value="Helical scaffold and wing domains of SecA"/>
    <property type="match status" value="1"/>
</dbReference>
<dbReference type="Gene3D" id="3.40.50.300">
    <property type="entry name" value="P-loop containing nucleotide triphosphate hydrolases"/>
    <property type="match status" value="2"/>
</dbReference>
<dbReference type="Gene3D" id="3.90.1440.10">
    <property type="entry name" value="SecA, preprotein cross-linking domain"/>
    <property type="match status" value="1"/>
</dbReference>
<dbReference type="HAMAP" id="MF_01382">
    <property type="entry name" value="SecA"/>
    <property type="match status" value="1"/>
</dbReference>
<dbReference type="InterPro" id="IPR014001">
    <property type="entry name" value="Helicase_ATP-bd"/>
</dbReference>
<dbReference type="InterPro" id="IPR001650">
    <property type="entry name" value="Helicase_C-like"/>
</dbReference>
<dbReference type="InterPro" id="IPR027417">
    <property type="entry name" value="P-loop_NTPase"/>
</dbReference>
<dbReference type="InterPro" id="IPR004027">
    <property type="entry name" value="SEC_C_motif"/>
</dbReference>
<dbReference type="InterPro" id="IPR000185">
    <property type="entry name" value="SecA"/>
</dbReference>
<dbReference type="InterPro" id="IPR020937">
    <property type="entry name" value="SecA_CS"/>
</dbReference>
<dbReference type="InterPro" id="IPR011115">
    <property type="entry name" value="SecA_DEAD"/>
</dbReference>
<dbReference type="InterPro" id="IPR014018">
    <property type="entry name" value="SecA_motor_DEAD"/>
</dbReference>
<dbReference type="InterPro" id="IPR011130">
    <property type="entry name" value="SecA_preprotein_X-link_dom"/>
</dbReference>
<dbReference type="InterPro" id="IPR044722">
    <property type="entry name" value="SecA_SF2_C"/>
</dbReference>
<dbReference type="InterPro" id="IPR011116">
    <property type="entry name" value="SecA_Wing/Scaffold"/>
</dbReference>
<dbReference type="InterPro" id="IPR036266">
    <property type="entry name" value="SecA_Wing/Scaffold_sf"/>
</dbReference>
<dbReference type="InterPro" id="IPR036670">
    <property type="entry name" value="SecA_X-link_sf"/>
</dbReference>
<dbReference type="NCBIfam" id="NF009538">
    <property type="entry name" value="PRK12904.1"/>
    <property type="match status" value="1"/>
</dbReference>
<dbReference type="NCBIfam" id="TIGR00963">
    <property type="entry name" value="secA"/>
    <property type="match status" value="1"/>
</dbReference>
<dbReference type="PANTHER" id="PTHR30612:SF0">
    <property type="entry name" value="CHLOROPLAST PROTEIN-TRANSPORTING ATPASE"/>
    <property type="match status" value="1"/>
</dbReference>
<dbReference type="PANTHER" id="PTHR30612">
    <property type="entry name" value="SECA INNER MEMBRANE COMPONENT OF SEC PROTEIN SECRETION SYSTEM"/>
    <property type="match status" value="1"/>
</dbReference>
<dbReference type="Pfam" id="PF21090">
    <property type="entry name" value="P-loop_SecA"/>
    <property type="match status" value="1"/>
</dbReference>
<dbReference type="Pfam" id="PF02810">
    <property type="entry name" value="SEC-C"/>
    <property type="match status" value="1"/>
</dbReference>
<dbReference type="Pfam" id="PF07517">
    <property type="entry name" value="SecA_DEAD"/>
    <property type="match status" value="1"/>
</dbReference>
<dbReference type="Pfam" id="PF01043">
    <property type="entry name" value="SecA_PP_bind"/>
    <property type="match status" value="1"/>
</dbReference>
<dbReference type="Pfam" id="PF07516">
    <property type="entry name" value="SecA_SW"/>
    <property type="match status" value="1"/>
</dbReference>
<dbReference type="PRINTS" id="PR00906">
    <property type="entry name" value="SECA"/>
</dbReference>
<dbReference type="SMART" id="SM00957">
    <property type="entry name" value="SecA_DEAD"/>
    <property type="match status" value="1"/>
</dbReference>
<dbReference type="SMART" id="SM00958">
    <property type="entry name" value="SecA_PP_bind"/>
    <property type="match status" value="1"/>
</dbReference>
<dbReference type="SUPFAM" id="SSF81886">
    <property type="entry name" value="Helical scaffold and wing domains of SecA"/>
    <property type="match status" value="1"/>
</dbReference>
<dbReference type="SUPFAM" id="SSF52540">
    <property type="entry name" value="P-loop containing nucleoside triphosphate hydrolases"/>
    <property type="match status" value="2"/>
</dbReference>
<dbReference type="SUPFAM" id="SSF81767">
    <property type="entry name" value="Pre-protein crosslinking domain of SecA"/>
    <property type="match status" value="1"/>
</dbReference>
<dbReference type="PROSITE" id="PS01312">
    <property type="entry name" value="SECA"/>
    <property type="match status" value="1"/>
</dbReference>
<dbReference type="PROSITE" id="PS51196">
    <property type="entry name" value="SECA_MOTOR_DEAD"/>
    <property type="match status" value="1"/>
</dbReference>
<sequence length="875" mass="100902">MLIQFLTKIFSNHNNRILKKFKKIVLSVNKLEKNFEKLSDKELQAQTELFRLRLRNGETLDDILPEAFALVREASKRVFSMRHFDVQILGGIALNKQCIAEMRTGEGKTLTSTLPAYLNALNGKGVHIVTMNDYLARRDAEKNTPLFEFLGLTVGLNLSEMSFFSKRKAYLSDITYGTNNEYGFDYLRDNMVFSPEERVQRKLNYALVDEVDSILIDEARTPLIISGPSEDSSELYKEINKIVPFLNSQKKEDSDIFCGTGDFSIDEKSKQIYLTERGLIKVEKILFDKKLMNTGESLYSSNNIILMHHVLSALRAHKLFVRNVDYLVKDNSVIIVDEHTGRTMPGRRWSDGLHQAIEAKENVSIKNENQTLASITFQNYFRLYEKIAGMTGTAETESFEFNSIYNLDTIVIPTNRKMIRKDFPDLVYMTEKEKINAIIQDIQKCIKLNQPVLVGTVSIEKSEIISKELLKLNINHNVLNAKFHAKEAEIIAQAGKPGSITIATNMAGRGTDIVLGGNLEVELNKYKNITSRKIEEIKKKWQSEHDLVVSAGGLHIIGTERHESRRIDNQLRGRSGRQGDTGSSRFYLSMEDSLMRIFASDKIVHMMKKLGLAFNEAIEHSWVTKAIENAQKKVENRNFDIRKQLLEYDDVINEQRSAIYSQRNKLIDARDIKLMIYDIFKDVLKKNIILYIPKNTFHDKWNITDLKDKLNIDFYLNAPILDWINIEPNLTDKKIIKRIIDFARINYKNKEILIGSNNMRIIEKIIMLQTLDSLWKEHLAAVDYLRQGIHLRGYAQKDPKQEYKRESFNMFSSMLELLKFEVVSFLSRINSSYAKKYIDLNKHLVITHNNTMKISRNSPCLCGSGKKYKYCHGSL</sequence>
<evidence type="ECO:0000255" key="1">
    <source>
        <dbReference type="HAMAP-Rule" id="MF_01382"/>
    </source>
</evidence>
<gene>
    <name evidence="1" type="primary">secA</name>
    <name type="ordered locus">BU201</name>
</gene>
<reference key="1">
    <citation type="journal article" date="2000" name="Nature">
        <title>Genome sequence of the endocellular bacterial symbiont of aphids Buchnera sp. APS.</title>
        <authorList>
            <person name="Shigenobu S."/>
            <person name="Watanabe H."/>
            <person name="Hattori M."/>
            <person name="Sakaki Y."/>
            <person name="Ishikawa H."/>
        </authorList>
    </citation>
    <scope>NUCLEOTIDE SEQUENCE [LARGE SCALE GENOMIC DNA]</scope>
    <source>
        <strain>APS</strain>
    </source>
</reference>
<proteinExistence type="inferred from homology"/>
<comment type="function">
    <text evidence="1">Part of the Sec protein translocase complex. Interacts with the SecYEG preprotein conducting channel. Has a central role in coupling the hydrolysis of ATP to the transfer of proteins into and across the cell membrane, serving both as a receptor for the preprotein-SecB complex and as an ATP-driven molecular motor driving the stepwise translocation of polypeptide chains across the membrane.</text>
</comment>
<comment type="catalytic activity">
    <reaction evidence="1">
        <text>ATP + H2O + cellular proteinSide 1 = ADP + phosphate + cellular proteinSide 2.</text>
        <dbReference type="EC" id="7.4.2.8"/>
    </reaction>
</comment>
<comment type="cofactor">
    <cofactor evidence="1">
        <name>Zn(2+)</name>
        <dbReference type="ChEBI" id="CHEBI:29105"/>
    </cofactor>
    <text evidence="1">May bind 1 zinc ion per subunit.</text>
</comment>
<comment type="subunit">
    <text evidence="1">Monomer and homodimer. Part of the essential Sec protein translocation apparatus which comprises SecA, SecYEG and auxiliary proteins SecDF-YajC and YidC.</text>
</comment>
<comment type="subcellular location">
    <subcellularLocation>
        <location evidence="1">Cell inner membrane</location>
        <topology evidence="1">Peripheral membrane protein</topology>
        <orientation evidence="1">Cytoplasmic side</orientation>
    </subcellularLocation>
    <subcellularLocation>
        <location evidence="1">Cytoplasm</location>
    </subcellularLocation>
    <text evidence="1">Distribution is 50-50.</text>
</comment>
<comment type="similarity">
    <text evidence="1">Belongs to the SecA family.</text>
</comment>